<sequence length="842" mass="97438">MIKERKPSKSRAPGKGHKQIPGVAKESQPIARTRTGNVEFTPAKTHDMVRSLFDPTLKKSFLECWISLAILSNVVLCYFMATKFGASFTKKFFLWQYVFWRLCYNVGIGVVLHFQSNYETLTNFAKMRSLFSKKNQQWLARFCRFEIESKMPNTYCLEEYPEEFNVWLLFRQFVDLILMQDFTTYILFVVLSIPKTVLSSHTVSFALGVIMILFNVWVKVDAHRVVKDYAWYWGDFFFFQDSKLVFDGVFNVSPHPMYSIGYMGYYGLSLISGDYKVLLVSIGGHLLQFLFLKYCENPHIEKIYGSDAVENDNAHIDELLVKENPNYSKPLITKGLWFTNVDKLRLTDYFTILTVASIVLFTFFLKPSTKALFWATLVAKITTSLFISLVLHKQSTSKWFTRLFLKNGYTQVHSFYQWQFLYNYCLTVSYTLLILQTWSQFRHLESRNYTQIIFGFLLCWLQKWCDDEILTAISEFGWFYGDFFLTNYISSRKLNSRGIYRYLSNPERFLGVAGCWGAVLITHFSPYNLILAALWTAANIALVKLVEEPHVSKVYGTSERKSGVSKTLMGFKPIRRFSEIMDKMELRLVRHLTSNDSPFEEEAPTSEEAQWNEVVQLALQSVTANLAPNCEFKLGDGKCDTFIIPGPVEAHWKLPSKLYNNDDWIGLYKVFETGEDRQRTRVSSNGRWTGTNEAAFPYSGRPKKSIVKFQRTGDFVNGTVKFDHSLMFYEEGVYELRYHSGNTHKVLMISQPFRLSLPIVKAESAEELSEGLHQFLAEVHALDGNSFNPNSNRYLGDRFLKGLIKKASGVDLSVKYLRRINYDVSIIGKRVQEIKAVLENLE</sequence>
<evidence type="ECO:0000255" key="1">
    <source>
        <dbReference type="HAMAP-Rule" id="MF_03217"/>
    </source>
</evidence>
<evidence type="ECO:0000256" key="2">
    <source>
        <dbReference type="SAM" id="MobiDB-lite"/>
    </source>
</evidence>
<proteinExistence type="inferred from homology"/>
<feature type="chain" id="PRO_0000405893" description="Phosphatidylethanolamine N-methyltransferase">
    <location>
        <begin position="1"/>
        <end position="842"/>
    </location>
</feature>
<feature type="topological domain" description="Lumenal" evidence="1">
    <location>
        <begin position="1"/>
        <end position="60"/>
    </location>
</feature>
<feature type="transmembrane region" description="Helical" evidence="1">
    <location>
        <begin position="61"/>
        <end position="81"/>
    </location>
</feature>
<feature type="topological domain" description="Cytoplasmic" evidence="1">
    <location>
        <begin position="82"/>
        <end position="91"/>
    </location>
</feature>
<feature type="transmembrane region" description="Helical" evidence="1">
    <location>
        <begin position="92"/>
        <end position="112"/>
    </location>
</feature>
<feature type="topological domain" description="Lumenal" evidence="1">
    <location>
        <begin position="113"/>
        <end position="172"/>
    </location>
</feature>
<feature type="transmembrane region" description="Helical" evidence="1">
    <location>
        <begin position="173"/>
        <end position="193"/>
    </location>
</feature>
<feature type="topological domain" description="Cytoplasmic" evidence="1">
    <location>
        <begin position="194"/>
        <end position="196"/>
    </location>
</feature>
<feature type="transmembrane region" description="Helical" evidence="1">
    <location>
        <begin position="197"/>
        <end position="217"/>
    </location>
</feature>
<feature type="topological domain" description="Lumenal" evidence="1">
    <location>
        <begin position="218"/>
        <end position="243"/>
    </location>
</feature>
<feature type="transmembrane region" description="Helical" evidence="1">
    <location>
        <begin position="244"/>
        <end position="264"/>
    </location>
</feature>
<feature type="topological domain" description="Cytoplasmic" evidence="1">
    <location>
        <begin position="265"/>
        <end position="270"/>
    </location>
</feature>
<feature type="transmembrane region" description="Helical" evidence="1">
    <location>
        <begin position="271"/>
        <end position="291"/>
    </location>
</feature>
<feature type="topological domain" description="Lumenal" evidence="1">
    <location>
        <begin position="292"/>
        <end position="345"/>
    </location>
</feature>
<feature type="transmembrane region" description="Helical" evidence="1">
    <location>
        <begin position="346"/>
        <end position="366"/>
    </location>
</feature>
<feature type="topological domain" description="Cytoplasmic" evidence="1">
    <location>
        <begin position="367"/>
        <end position="370"/>
    </location>
</feature>
<feature type="transmembrane region" description="Helical" evidence="1">
    <location>
        <begin position="371"/>
        <end position="391"/>
    </location>
</feature>
<feature type="topological domain" description="Lumenal" evidence="1">
    <location>
        <begin position="392"/>
        <end position="414"/>
    </location>
</feature>
<feature type="transmembrane region" description="Helical" evidence="1">
    <location>
        <begin position="415"/>
        <end position="435"/>
    </location>
</feature>
<feature type="topological domain" description="Cytoplasmic" evidence="1">
    <location>
        <begin position="436"/>
        <end position="468"/>
    </location>
</feature>
<feature type="transmembrane region" description="Helical" evidence="1">
    <location>
        <begin position="469"/>
        <end position="489"/>
    </location>
</feature>
<feature type="topological domain" description="Lumenal" evidence="1">
    <location>
        <begin position="490"/>
        <end position="514"/>
    </location>
</feature>
<feature type="transmembrane region" description="Helical" evidence="1">
    <location>
        <begin position="515"/>
        <end position="535"/>
    </location>
</feature>
<feature type="topological domain" description="Cytoplasmic" evidence="1">
    <location>
        <begin position="536"/>
        <end position="842"/>
    </location>
</feature>
<feature type="region of interest" description="Disordered" evidence="2">
    <location>
        <begin position="1"/>
        <end position="28"/>
    </location>
</feature>
<feature type="compositionally biased region" description="Basic residues" evidence="2">
    <location>
        <begin position="8"/>
        <end position="18"/>
    </location>
</feature>
<accession>C5DGB6</accession>
<keyword id="KW-0256">Endoplasmic reticulum</keyword>
<keyword id="KW-0444">Lipid biosynthesis</keyword>
<keyword id="KW-0443">Lipid metabolism</keyword>
<keyword id="KW-0472">Membrane</keyword>
<keyword id="KW-0489">Methyltransferase</keyword>
<keyword id="KW-0594">Phospholipid biosynthesis</keyword>
<keyword id="KW-1208">Phospholipid metabolism</keyword>
<keyword id="KW-1185">Reference proteome</keyword>
<keyword id="KW-0949">S-adenosyl-L-methionine</keyword>
<keyword id="KW-0808">Transferase</keyword>
<keyword id="KW-0812">Transmembrane</keyword>
<keyword id="KW-1133">Transmembrane helix</keyword>
<protein>
    <recommendedName>
        <fullName evidence="1">Phosphatidylethanolamine N-methyltransferase</fullName>
        <shortName evidence="1">PE methyltransferase</shortName>
        <shortName evidence="1">PEAMT</shortName>
        <shortName evidence="1">PEMT</shortName>
        <ecNumber evidence="1">2.1.1.17</ecNumber>
    </recommendedName>
</protein>
<reference key="1">
    <citation type="journal article" date="2009" name="Genome Res.">
        <title>Comparative genomics of protoploid Saccharomycetaceae.</title>
        <authorList>
            <consortium name="The Genolevures Consortium"/>
            <person name="Souciet J.-L."/>
            <person name="Dujon B."/>
            <person name="Gaillardin C."/>
            <person name="Johnston M."/>
            <person name="Baret P.V."/>
            <person name="Cliften P."/>
            <person name="Sherman D.J."/>
            <person name="Weissenbach J."/>
            <person name="Westhof E."/>
            <person name="Wincker P."/>
            <person name="Jubin C."/>
            <person name="Poulain J."/>
            <person name="Barbe V."/>
            <person name="Segurens B."/>
            <person name="Artiguenave F."/>
            <person name="Anthouard V."/>
            <person name="Vacherie B."/>
            <person name="Val M.-E."/>
            <person name="Fulton R.S."/>
            <person name="Minx P."/>
            <person name="Wilson R."/>
            <person name="Durrens P."/>
            <person name="Jean G."/>
            <person name="Marck C."/>
            <person name="Martin T."/>
            <person name="Nikolski M."/>
            <person name="Rolland T."/>
            <person name="Seret M.-L."/>
            <person name="Casaregola S."/>
            <person name="Despons L."/>
            <person name="Fairhead C."/>
            <person name="Fischer G."/>
            <person name="Lafontaine I."/>
            <person name="Leh V."/>
            <person name="Lemaire M."/>
            <person name="de Montigny J."/>
            <person name="Neuveglise C."/>
            <person name="Thierry A."/>
            <person name="Blanc-Lenfle I."/>
            <person name="Bleykasten C."/>
            <person name="Diffels J."/>
            <person name="Fritsch E."/>
            <person name="Frangeul L."/>
            <person name="Goeffon A."/>
            <person name="Jauniaux N."/>
            <person name="Kachouri-Lafond R."/>
            <person name="Payen C."/>
            <person name="Potier S."/>
            <person name="Pribylova L."/>
            <person name="Ozanne C."/>
            <person name="Richard G.-F."/>
            <person name="Sacerdot C."/>
            <person name="Straub M.-L."/>
            <person name="Talla E."/>
        </authorList>
    </citation>
    <scope>NUCLEOTIDE SEQUENCE [LARGE SCALE GENOMIC DNA]</scope>
    <source>
        <strain>ATCC 56472 / CBS 6340 / NRRL Y-8284</strain>
    </source>
</reference>
<name>CHO2_LACTC</name>
<organism>
    <name type="scientific">Lachancea thermotolerans (strain ATCC 56472 / CBS 6340 / NRRL Y-8284)</name>
    <name type="common">Yeast</name>
    <name type="synonym">Kluyveromyces thermotolerans</name>
    <dbReference type="NCBI Taxonomy" id="559295"/>
    <lineage>
        <taxon>Eukaryota</taxon>
        <taxon>Fungi</taxon>
        <taxon>Dikarya</taxon>
        <taxon>Ascomycota</taxon>
        <taxon>Saccharomycotina</taxon>
        <taxon>Saccharomycetes</taxon>
        <taxon>Saccharomycetales</taxon>
        <taxon>Saccharomycetaceae</taxon>
        <taxon>Lachancea</taxon>
    </lineage>
</organism>
<dbReference type="EC" id="2.1.1.17" evidence="1"/>
<dbReference type="EMBL" id="CU928168">
    <property type="protein sequence ID" value="CAR22458.1"/>
    <property type="molecule type" value="Genomic_DNA"/>
</dbReference>
<dbReference type="RefSeq" id="XP_002552896.1">
    <property type="nucleotide sequence ID" value="XM_002552850.1"/>
</dbReference>
<dbReference type="FunCoup" id="C5DGB6">
    <property type="interactions" value="93"/>
</dbReference>
<dbReference type="STRING" id="559295.C5DGB6"/>
<dbReference type="GeneID" id="8295121"/>
<dbReference type="KEGG" id="lth:KLTH0D03982g"/>
<dbReference type="eggNOG" id="ENOG502QRGH">
    <property type="taxonomic scope" value="Eukaryota"/>
</dbReference>
<dbReference type="HOGENOM" id="CLU_005987_0_1_1"/>
<dbReference type="InParanoid" id="C5DGB6"/>
<dbReference type="OMA" id="RIWYSVG"/>
<dbReference type="OrthoDB" id="4583at2759"/>
<dbReference type="UniPathway" id="UPA00753"/>
<dbReference type="Proteomes" id="UP000002036">
    <property type="component" value="Chromosome D"/>
</dbReference>
<dbReference type="GO" id="GO:0005789">
    <property type="term" value="C:endoplasmic reticulum membrane"/>
    <property type="evidence" value="ECO:0007669"/>
    <property type="project" value="UniProtKB-SubCell"/>
</dbReference>
<dbReference type="GO" id="GO:0004608">
    <property type="term" value="F:phosphatidylethanolamine N-methyltransferase activity"/>
    <property type="evidence" value="ECO:0007669"/>
    <property type="project" value="UniProtKB-UniRule"/>
</dbReference>
<dbReference type="GO" id="GO:0032259">
    <property type="term" value="P:methylation"/>
    <property type="evidence" value="ECO:0007669"/>
    <property type="project" value="UniProtKB-KW"/>
</dbReference>
<dbReference type="GO" id="GO:0006656">
    <property type="term" value="P:phosphatidylcholine biosynthetic process"/>
    <property type="evidence" value="ECO:0007669"/>
    <property type="project" value="UniProtKB-UniRule"/>
</dbReference>
<dbReference type="Gene3D" id="1.20.120.1630">
    <property type="match status" value="1"/>
</dbReference>
<dbReference type="HAMAP" id="MF_03217">
    <property type="entry name" value="PEMT"/>
    <property type="match status" value="1"/>
</dbReference>
<dbReference type="InterPro" id="IPR007318">
    <property type="entry name" value="Phopholipid_MeTrfase"/>
</dbReference>
<dbReference type="InterPro" id="IPR016219">
    <property type="entry name" value="Phosphatid-EA_MeTrfase_fun"/>
</dbReference>
<dbReference type="PANTHER" id="PTHR32138">
    <property type="entry name" value="PHOSPHATIDYLETHANOLAMINE N-METHYLTRANSFERASE"/>
    <property type="match status" value="1"/>
</dbReference>
<dbReference type="PANTHER" id="PTHR32138:SF0">
    <property type="entry name" value="PHOSPHATIDYLETHANOLAMINE N-METHYLTRANSFERASE"/>
    <property type="match status" value="1"/>
</dbReference>
<dbReference type="Pfam" id="PF04191">
    <property type="entry name" value="PEMT"/>
    <property type="match status" value="2"/>
</dbReference>
<dbReference type="PIRSF" id="PIRSF000383">
    <property type="entry name" value="PEAMT"/>
    <property type="match status" value="1"/>
</dbReference>
<dbReference type="PROSITE" id="PS51598">
    <property type="entry name" value="SAM_CHO2"/>
    <property type="match status" value="1"/>
</dbReference>
<gene>
    <name type="primary">CHO2</name>
    <name type="ordered locus">KLTH0D03982g</name>
</gene>
<comment type="function">
    <text evidence="1">Catalyzes the first step of the methylation pathway of phosphatidylcholine biosynthesis, the SAM-dependent methylation of phosphatidylethanolamine (PE) to phosphatidylmonomethylethanolamine (PMME).</text>
</comment>
<comment type="catalytic activity">
    <reaction evidence="1">
        <text>a 1,2-diacyl-sn-glycero-3-phosphoethanolamine + S-adenosyl-L-methionine = a 1,2-diacyl-sn-glycero-3-phospho-N-methylethanolamine + S-adenosyl-L-homocysteine + H(+)</text>
        <dbReference type="Rhea" id="RHEA:11164"/>
        <dbReference type="ChEBI" id="CHEBI:15378"/>
        <dbReference type="ChEBI" id="CHEBI:57856"/>
        <dbReference type="ChEBI" id="CHEBI:59789"/>
        <dbReference type="ChEBI" id="CHEBI:64573"/>
        <dbReference type="ChEBI" id="CHEBI:64612"/>
        <dbReference type="EC" id="2.1.1.17"/>
    </reaction>
</comment>
<comment type="pathway">
    <text evidence="1">Phospholipid metabolism; phosphatidylcholine biosynthesis.</text>
</comment>
<comment type="subcellular location">
    <subcellularLocation>
        <location evidence="1">Endoplasmic reticulum membrane</location>
        <topology evidence="1">Multi-pass membrane protein</topology>
    </subcellularLocation>
</comment>
<comment type="similarity">
    <text evidence="1">Belongs to the class VI-like SAM-binding methyltransferase superfamily. CHO2 family.</text>
</comment>